<evidence type="ECO:0000255" key="1">
    <source>
        <dbReference type="HAMAP-Rule" id="MF_00173"/>
    </source>
</evidence>
<sequence>MNKGHRHIIIRELITSNEIDTQEDLVELLLERDVKVTQATVSRDIKELHLVKVPTQTGGYKYSLPADNSFNPHQKLKRALIDCFIGIDNVQFMIILKVMPGNGNSVGALIDNLDWPEKAGTICGDDTCLIICRSEENAKTLTDRFIDML</sequence>
<dbReference type="EMBL" id="CP001175">
    <property type="protein sequence ID" value="ACK39551.1"/>
    <property type="molecule type" value="Genomic_DNA"/>
</dbReference>
<dbReference type="RefSeq" id="WP_003722493.1">
    <property type="nucleotide sequence ID" value="NC_011660.1"/>
</dbReference>
<dbReference type="SMR" id="B8DFW1"/>
<dbReference type="GeneID" id="93239243"/>
<dbReference type="KEGG" id="lmh:LMHCC_1204"/>
<dbReference type="HOGENOM" id="CLU_097103_3_0_9"/>
<dbReference type="UniPathway" id="UPA00068"/>
<dbReference type="GO" id="GO:0005737">
    <property type="term" value="C:cytoplasm"/>
    <property type="evidence" value="ECO:0007669"/>
    <property type="project" value="UniProtKB-SubCell"/>
</dbReference>
<dbReference type="GO" id="GO:0034618">
    <property type="term" value="F:arginine binding"/>
    <property type="evidence" value="ECO:0007669"/>
    <property type="project" value="InterPro"/>
</dbReference>
<dbReference type="GO" id="GO:0003677">
    <property type="term" value="F:DNA binding"/>
    <property type="evidence" value="ECO:0007669"/>
    <property type="project" value="UniProtKB-KW"/>
</dbReference>
<dbReference type="GO" id="GO:0003700">
    <property type="term" value="F:DNA-binding transcription factor activity"/>
    <property type="evidence" value="ECO:0007669"/>
    <property type="project" value="UniProtKB-UniRule"/>
</dbReference>
<dbReference type="GO" id="GO:0006526">
    <property type="term" value="P:L-arginine biosynthetic process"/>
    <property type="evidence" value="ECO:0007669"/>
    <property type="project" value="UniProtKB-UniPathway"/>
</dbReference>
<dbReference type="GO" id="GO:0051259">
    <property type="term" value="P:protein complex oligomerization"/>
    <property type="evidence" value="ECO:0007669"/>
    <property type="project" value="InterPro"/>
</dbReference>
<dbReference type="GO" id="GO:1900079">
    <property type="term" value="P:regulation of arginine biosynthetic process"/>
    <property type="evidence" value="ECO:0007669"/>
    <property type="project" value="UniProtKB-UniRule"/>
</dbReference>
<dbReference type="Gene3D" id="3.30.1360.40">
    <property type="match status" value="1"/>
</dbReference>
<dbReference type="Gene3D" id="1.10.10.10">
    <property type="entry name" value="Winged helix-like DNA-binding domain superfamily/Winged helix DNA-binding domain"/>
    <property type="match status" value="1"/>
</dbReference>
<dbReference type="HAMAP" id="MF_00173">
    <property type="entry name" value="Arg_repressor"/>
    <property type="match status" value="1"/>
</dbReference>
<dbReference type="InterPro" id="IPR001669">
    <property type="entry name" value="Arg_repress"/>
</dbReference>
<dbReference type="InterPro" id="IPR020899">
    <property type="entry name" value="Arg_repress_C"/>
</dbReference>
<dbReference type="InterPro" id="IPR036251">
    <property type="entry name" value="Arg_repress_C_sf"/>
</dbReference>
<dbReference type="InterPro" id="IPR020900">
    <property type="entry name" value="Arg_repress_DNA-bd"/>
</dbReference>
<dbReference type="InterPro" id="IPR036388">
    <property type="entry name" value="WH-like_DNA-bd_sf"/>
</dbReference>
<dbReference type="InterPro" id="IPR036390">
    <property type="entry name" value="WH_DNA-bd_sf"/>
</dbReference>
<dbReference type="NCBIfam" id="TIGR01529">
    <property type="entry name" value="argR_whole"/>
    <property type="match status" value="1"/>
</dbReference>
<dbReference type="NCBIfam" id="NF003281">
    <property type="entry name" value="PRK04280.1"/>
    <property type="match status" value="1"/>
</dbReference>
<dbReference type="PANTHER" id="PTHR34471">
    <property type="entry name" value="ARGININE REPRESSOR"/>
    <property type="match status" value="1"/>
</dbReference>
<dbReference type="PANTHER" id="PTHR34471:SF1">
    <property type="entry name" value="ARGININE REPRESSOR"/>
    <property type="match status" value="1"/>
</dbReference>
<dbReference type="Pfam" id="PF01316">
    <property type="entry name" value="Arg_repressor"/>
    <property type="match status" value="1"/>
</dbReference>
<dbReference type="Pfam" id="PF02863">
    <property type="entry name" value="Arg_repressor_C"/>
    <property type="match status" value="1"/>
</dbReference>
<dbReference type="PRINTS" id="PR01467">
    <property type="entry name" value="ARGREPRESSOR"/>
</dbReference>
<dbReference type="SUPFAM" id="SSF55252">
    <property type="entry name" value="C-terminal domain of arginine repressor"/>
    <property type="match status" value="1"/>
</dbReference>
<dbReference type="SUPFAM" id="SSF46785">
    <property type="entry name" value="Winged helix' DNA-binding domain"/>
    <property type="match status" value="1"/>
</dbReference>
<keyword id="KW-0028">Amino-acid biosynthesis</keyword>
<keyword id="KW-0055">Arginine biosynthesis</keyword>
<keyword id="KW-0963">Cytoplasm</keyword>
<keyword id="KW-0238">DNA-binding</keyword>
<keyword id="KW-0678">Repressor</keyword>
<keyword id="KW-0804">Transcription</keyword>
<keyword id="KW-0805">Transcription regulation</keyword>
<name>ARGR_LISMH</name>
<protein>
    <recommendedName>
        <fullName evidence="1">Arginine repressor</fullName>
    </recommendedName>
</protein>
<reference key="1">
    <citation type="journal article" date="2011" name="J. Bacteriol.">
        <title>Genome sequence of lineage III Listeria monocytogenes strain HCC23.</title>
        <authorList>
            <person name="Steele C.L."/>
            <person name="Donaldson J.R."/>
            <person name="Paul D."/>
            <person name="Banes M.M."/>
            <person name="Arick T."/>
            <person name="Bridges S.M."/>
            <person name="Lawrence M.L."/>
        </authorList>
    </citation>
    <scope>NUCLEOTIDE SEQUENCE [LARGE SCALE GENOMIC DNA]</scope>
    <source>
        <strain>HCC23</strain>
    </source>
</reference>
<organism>
    <name type="scientific">Listeria monocytogenes serotype 4a (strain HCC23)</name>
    <dbReference type="NCBI Taxonomy" id="552536"/>
    <lineage>
        <taxon>Bacteria</taxon>
        <taxon>Bacillati</taxon>
        <taxon>Bacillota</taxon>
        <taxon>Bacilli</taxon>
        <taxon>Bacillales</taxon>
        <taxon>Listeriaceae</taxon>
        <taxon>Listeria</taxon>
    </lineage>
</organism>
<comment type="function">
    <text evidence="1">Regulates arginine biosynthesis genes.</text>
</comment>
<comment type="pathway">
    <text>Amino-acid biosynthesis; L-arginine biosynthesis [regulation].</text>
</comment>
<comment type="subcellular location">
    <subcellularLocation>
        <location evidence="1">Cytoplasm</location>
    </subcellularLocation>
</comment>
<comment type="similarity">
    <text evidence="1">Belongs to the ArgR family.</text>
</comment>
<feature type="chain" id="PRO_1000123799" description="Arginine repressor">
    <location>
        <begin position="1"/>
        <end position="149"/>
    </location>
</feature>
<proteinExistence type="inferred from homology"/>
<gene>
    <name evidence="1" type="primary">argR</name>
    <name type="ordered locus">LMHCC_1204</name>
</gene>
<accession>B8DFW1</accession>